<comment type="function">
    <text evidence="1">The RuvA-RuvB-RuvC complex processes Holliday junction (HJ) DNA during genetic recombination and DNA repair, while the RuvA-RuvB complex plays an important role in the rescue of blocked DNA replication forks via replication fork reversal (RFR). RuvA specifically binds to HJ cruciform DNA, conferring on it an open structure. The RuvB hexamer acts as an ATP-dependent pump, pulling dsDNA into and through the RuvAB complex. RuvB forms 2 homohexamers on either side of HJ DNA bound by 1 or 2 RuvA tetramers; 4 subunits per hexamer contact DNA at a time. Coordinated motions by a converter formed by DNA-disengaged RuvB subunits stimulates ATP hydrolysis and nucleotide exchange. Immobilization of the converter enables RuvB to convert the ATP-contained energy into a lever motion, pulling 2 nucleotides of DNA out of the RuvA tetramer per ATP hydrolyzed, thus driving DNA branch migration. The RuvB motors rotate together with the DNA substrate, which together with the progressing nucleotide cycle form the mechanistic basis for DNA recombination by continuous HJ branch migration. Branch migration allows RuvC to scan DNA until it finds its consensus sequence, where it cleaves and resolves cruciform DNA.</text>
</comment>
<comment type="catalytic activity">
    <reaction evidence="1">
        <text>ATP + H2O = ADP + phosphate + H(+)</text>
        <dbReference type="Rhea" id="RHEA:13065"/>
        <dbReference type="ChEBI" id="CHEBI:15377"/>
        <dbReference type="ChEBI" id="CHEBI:15378"/>
        <dbReference type="ChEBI" id="CHEBI:30616"/>
        <dbReference type="ChEBI" id="CHEBI:43474"/>
        <dbReference type="ChEBI" id="CHEBI:456216"/>
    </reaction>
</comment>
<comment type="subunit">
    <text evidence="1">Homohexamer. Forms an RuvA(8)-RuvB(12)-Holliday junction (HJ) complex. HJ DNA is sandwiched between 2 RuvA tetramers; dsDNA enters through RuvA and exits via RuvB. An RuvB hexamer assembles on each DNA strand where it exits the tetramer. Each RuvB hexamer is contacted by two RuvA subunits (via domain III) on 2 adjacent RuvB subunits; this complex drives branch migration. In the full resolvosome a probable DNA-RuvA(4)-RuvB(12)-RuvC(2) complex forms which resolves the HJ.</text>
</comment>
<comment type="subcellular location">
    <subcellularLocation>
        <location evidence="1">Cytoplasm</location>
    </subcellularLocation>
</comment>
<comment type="domain">
    <text evidence="1">Has 3 domains, the large (RuvB-L) and small ATPase (RuvB-S) domains and the C-terminal head (RuvB-H) domain. The head domain binds DNA, while the ATPase domains jointly bind ATP, ADP or are empty depending on the state of the subunit in the translocation cycle. During a single DNA translocation step the structure of each domain remains the same, but their relative positions change.</text>
</comment>
<comment type="similarity">
    <text evidence="1">Belongs to the RuvB family.</text>
</comment>
<reference key="1">
    <citation type="book" date="2006" name="Gram positive pathogens, 2nd edition">
        <title>The Staphylococcus aureus NCTC 8325 genome.</title>
        <editorList>
            <person name="Fischetti V."/>
            <person name="Novick R."/>
            <person name="Ferretti J."/>
            <person name="Portnoy D."/>
            <person name="Rood J."/>
        </editorList>
        <authorList>
            <person name="Gillaspy A.F."/>
            <person name="Worrell V."/>
            <person name="Orvis J."/>
            <person name="Roe B.A."/>
            <person name="Dyer D.W."/>
            <person name="Iandolo J.J."/>
        </authorList>
    </citation>
    <scope>NUCLEOTIDE SEQUENCE [LARGE SCALE GENOMIC DNA]</scope>
    <source>
        <strain>NCTC 8325 / PS 47</strain>
    </source>
</reference>
<feature type="chain" id="PRO_1000001484" description="Holliday junction branch migration complex subunit RuvB">
    <location>
        <begin position="1"/>
        <end position="334"/>
    </location>
</feature>
<feature type="region of interest" description="Large ATPase domain (RuvB-L)" evidence="1">
    <location>
        <begin position="1"/>
        <end position="182"/>
    </location>
</feature>
<feature type="region of interest" description="Small ATPAse domain (RuvB-S)" evidence="1">
    <location>
        <begin position="183"/>
        <end position="253"/>
    </location>
</feature>
<feature type="region of interest" description="Head domain (RuvB-H)" evidence="1">
    <location>
        <begin position="256"/>
        <end position="334"/>
    </location>
</feature>
<feature type="binding site" evidence="1">
    <location>
        <position position="21"/>
    </location>
    <ligand>
        <name>ATP</name>
        <dbReference type="ChEBI" id="CHEBI:30616"/>
    </ligand>
</feature>
<feature type="binding site" evidence="1">
    <location>
        <position position="22"/>
    </location>
    <ligand>
        <name>ATP</name>
        <dbReference type="ChEBI" id="CHEBI:30616"/>
    </ligand>
</feature>
<feature type="binding site" evidence="1">
    <location>
        <position position="63"/>
    </location>
    <ligand>
        <name>ATP</name>
        <dbReference type="ChEBI" id="CHEBI:30616"/>
    </ligand>
</feature>
<feature type="binding site" evidence="1">
    <location>
        <position position="66"/>
    </location>
    <ligand>
        <name>ATP</name>
        <dbReference type="ChEBI" id="CHEBI:30616"/>
    </ligand>
</feature>
<feature type="binding site" evidence="1">
    <location>
        <position position="67"/>
    </location>
    <ligand>
        <name>ATP</name>
        <dbReference type="ChEBI" id="CHEBI:30616"/>
    </ligand>
</feature>
<feature type="binding site" evidence="1">
    <location>
        <position position="67"/>
    </location>
    <ligand>
        <name>Mg(2+)</name>
        <dbReference type="ChEBI" id="CHEBI:18420"/>
    </ligand>
</feature>
<feature type="binding site" evidence="1">
    <location>
        <position position="68"/>
    </location>
    <ligand>
        <name>ATP</name>
        <dbReference type="ChEBI" id="CHEBI:30616"/>
    </ligand>
</feature>
<feature type="binding site" evidence="1">
    <location>
        <begin position="129"/>
        <end position="131"/>
    </location>
    <ligand>
        <name>ATP</name>
        <dbReference type="ChEBI" id="CHEBI:30616"/>
    </ligand>
</feature>
<feature type="binding site" evidence="1">
    <location>
        <position position="172"/>
    </location>
    <ligand>
        <name>ATP</name>
        <dbReference type="ChEBI" id="CHEBI:30616"/>
    </ligand>
</feature>
<feature type="binding site" evidence="1">
    <location>
        <position position="182"/>
    </location>
    <ligand>
        <name>ATP</name>
        <dbReference type="ChEBI" id="CHEBI:30616"/>
    </ligand>
</feature>
<feature type="binding site" evidence="1">
    <location>
        <position position="219"/>
    </location>
    <ligand>
        <name>ATP</name>
        <dbReference type="ChEBI" id="CHEBI:30616"/>
    </ligand>
</feature>
<feature type="binding site" evidence="1">
    <location>
        <position position="292"/>
    </location>
    <ligand>
        <name>DNA</name>
        <dbReference type="ChEBI" id="CHEBI:16991"/>
    </ligand>
</feature>
<feature type="binding site" evidence="1">
    <location>
        <position position="311"/>
    </location>
    <ligand>
        <name>DNA</name>
        <dbReference type="ChEBI" id="CHEBI:16991"/>
    </ligand>
</feature>
<feature type="binding site" evidence="1">
    <location>
        <position position="316"/>
    </location>
    <ligand>
        <name>DNA</name>
        <dbReference type="ChEBI" id="CHEBI:16991"/>
    </ligand>
</feature>
<evidence type="ECO:0000255" key="1">
    <source>
        <dbReference type="HAMAP-Rule" id="MF_00016"/>
    </source>
</evidence>
<sequence length="334" mass="37718">MNERMVDQSMHSEETDFELSLRPTRLRQYIGQNSIKSNLEVFIKAAKLRHEPLDHVLLFGPPGLGKTTLSNIIANEMEVNIRTVSGPSLERPGDLAAILSGLQPGDVLFIDEIHRLSSVVEEVLYPAMEDFFLDIIIGKGDEARSIRIDLPPFTLVGATTRAGSLTGPLRDRFGVHLRLEYYNESDLKEIIIRTAEVLGTGIDEESAIELAKRSRGTPRVANRLLKRVRDFQQVNEDEQIYIETTKHALGLLQVDQHGLDYIDHKMMNCIIKQYNGGPVGLDTIAVTIGEERITIEDVYEPFLIQKGFLERTPRGRKATPLAYEHFAKSNEERE</sequence>
<dbReference type="EC" id="3.6.4.-" evidence="1"/>
<dbReference type="EMBL" id="CP000253">
    <property type="protein sequence ID" value="ABD30820.1"/>
    <property type="molecule type" value="Genomic_DNA"/>
</dbReference>
<dbReference type="RefSeq" id="WP_001005767.1">
    <property type="nucleotide sequence ID" value="NZ_LS483365.1"/>
</dbReference>
<dbReference type="RefSeq" id="YP_500256.1">
    <property type="nucleotide sequence ID" value="NC_007795.1"/>
</dbReference>
<dbReference type="SMR" id="Q2FXT4"/>
<dbReference type="STRING" id="93061.SAOUHSC_01750"/>
<dbReference type="PaxDb" id="1280-SAXN108_1668"/>
<dbReference type="GeneID" id="3920549"/>
<dbReference type="KEGG" id="sao:SAOUHSC_01750"/>
<dbReference type="PATRIC" id="fig|93061.5.peg.1594"/>
<dbReference type="eggNOG" id="COG2255">
    <property type="taxonomic scope" value="Bacteria"/>
</dbReference>
<dbReference type="HOGENOM" id="CLU_055599_1_0_9"/>
<dbReference type="OrthoDB" id="9804478at2"/>
<dbReference type="PRO" id="PR:Q2FXT4"/>
<dbReference type="Proteomes" id="UP000008816">
    <property type="component" value="Chromosome"/>
</dbReference>
<dbReference type="GO" id="GO:0005737">
    <property type="term" value="C:cytoplasm"/>
    <property type="evidence" value="ECO:0007669"/>
    <property type="project" value="UniProtKB-SubCell"/>
</dbReference>
<dbReference type="GO" id="GO:0048476">
    <property type="term" value="C:Holliday junction resolvase complex"/>
    <property type="evidence" value="ECO:0007669"/>
    <property type="project" value="UniProtKB-UniRule"/>
</dbReference>
<dbReference type="GO" id="GO:0005524">
    <property type="term" value="F:ATP binding"/>
    <property type="evidence" value="ECO:0007669"/>
    <property type="project" value="UniProtKB-UniRule"/>
</dbReference>
<dbReference type="GO" id="GO:0016887">
    <property type="term" value="F:ATP hydrolysis activity"/>
    <property type="evidence" value="ECO:0007669"/>
    <property type="project" value="InterPro"/>
</dbReference>
<dbReference type="GO" id="GO:0000400">
    <property type="term" value="F:four-way junction DNA binding"/>
    <property type="evidence" value="ECO:0007669"/>
    <property type="project" value="UniProtKB-UniRule"/>
</dbReference>
<dbReference type="GO" id="GO:0009378">
    <property type="term" value="F:four-way junction helicase activity"/>
    <property type="evidence" value="ECO:0007669"/>
    <property type="project" value="InterPro"/>
</dbReference>
<dbReference type="GO" id="GO:0006310">
    <property type="term" value="P:DNA recombination"/>
    <property type="evidence" value="ECO:0007669"/>
    <property type="project" value="UniProtKB-UniRule"/>
</dbReference>
<dbReference type="GO" id="GO:0006281">
    <property type="term" value="P:DNA repair"/>
    <property type="evidence" value="ECO:0007669"/>
    <property type="project" value="UniProtKB-UniRule"/>
</dbReference>
<dbReference type="CDD" id="cd00009">
    <property type="entry name" value="AAA"/>
    <property type="match status" value="1"/>
</dbReference>
<dbReference type="Gene3D" id="1.10.8.60">
    <property type="match status" value="1"/>
</dbReference>
<dbReference type="Gene3D" id="3.40.50.300">
    <property type="entry name" value="P-loop containing nucleotide triphosphate hydrolases"/>
    <property type="match status" value="1"/>
</dbReference>
<dbReference type="Gene3D" id="1.10.10.10">
    <property type="entry name" value="Winged helix-like DNA-binding domain superfamily/Winged helix DNA-binding domain"/>
    <property type="match status" value="1"/>
</dbReference>
<dbReference type="HAMAP" id="MF_00016">
    <property type="entry name" value="DNA_HJ_migration_RuvB"/>
    <property type="match status" value="1"/>
</dbReference>
<dbReference type="InterPro" id="IPR003593">
    <property type="entry name" value="AAA+_ATPase"/>
</dbReference>
<dbReference type="InterPro" id="IPR041445">
    <property type="entry name" value="AAA_lid_4"/>
</dbReference>
<dbReference type="InterPro" id="IPR004605">
    <property type="entry name" value="DNA_helicase_Holl-junc_RuvB"/>
</dbReference>
<dbReference type="InterPro" id="IPR027417">
    <property type="entry name" value="P-loop_NTPase"/>
</dbReference>
<dbReference type="InterPro" id="IPR008824">
    <property type="entry name" value="RuvB-like_N"/>
</dbReference>
<dbReference type="InterPro" id="IPR008823">
    <property type="entry name" value="RuvB_C"/>
</dbReference>
<dbReference type="InterPro" id="IPR036388">
    <property type="entry name" value="WH-like_DNA-bd_sf"/>
</dbReference>
<dbReference type="InterPro" id="IPR036390">
    <property type="entry name" value="WH_DNA-bd_sf"/>
</dbReference>
<dbReference type="NCBIfam" id="NF000868">
    <property type="entry name" value="PRK00080.1"/>
    <property type="match status" value="1"/>
</dbReference>
<dbReference type="NCBIfam" id="TIGR00635">
    <property type="entry name" value="ruvB"/>
    <property type="match status" value="1"/>
</dbReference>
<dbReference type="PANTHER" id="PTHR42848">
    <property type="match status" value="1"/>
</dbReference>
<dbReference type="PANTHER" id="PTHR42848:SF1">
    <property type="entry name" value="HOLLIDAY JUNCTION BRANCH MIGRATION COMPLEX SUBUNIT RUVB"/>
    <property type="match status" value="1"/>
</dbReference>
<dbReference type="Pfam" id="PF17864">
    <property type="entry name" value="AAA_lid_4"/>
    <property type="match status" value="1"/>
</dbReference>
<dbReference type="Pfam" id="PF05491">
    <property type="entry name" value="RuvB_C"/>
    <property type="match status" value="1"/>
</dbReference>
<dbReference type="Pfam" id="PF05496">
    <property type="entry name" value="RuvB_N"/>
    <property type="match status" value="1"/>
</dbReference>
<dbReference type="SMART" id="SM00382">
    <property type="entry name" value="AAA"/>
    <property type="match status" value="1"/>
</dbReference>
<dbReference type="SUPFAM" id="SSF52540">
    <property type="entry name" value="P-loop containing nucleoside triphosphate hydrolases"/>
    <property type="match status" value="1"/>
</dbReference>
<dbReference type="SUPFAM" id="SSF46785">
    <property type="entry name" value="Winged helix' DNA-binding domain"/>
    <property type="match status" value="1"/>
</dbReference>
<name>RUVB_STAA8</name>
<accession>Q2FXT4</accession>
<proteinExistence type="inferred from homology"/>
<keyword id="KW-0067">ATP-binding</keyword>
<keyword id="KW-0963">Cytoplasm</keyword>
<keyword id="KW-0227">DNA damage</keyword>
<keyword id="KW-0233">DNA recombination</keyword>
<keyword id="KW-0234">DNA repair</keyword>
<keyword id="KW-0238">DNA-binding</keyword>
<keyword id="KW-0378">Hydrolase</keyword>
<keyword id="KW-0547">Nucleotide-binding</keyword>
<keyword id="KW-1185">Reference proteome</keyword>
<gene>
    <name evidence="1" type="primary">ruvB</name>
    <name type="ordered locus">SAOUHSC_01750</name>
</gene>
<protein>
    <recommendedName>
        <fullName evidence="1">Holliday junction branch migration complex subunit RuvB</fullName>
        <ecNumber evidence="1">3.6.4.-</ecNumber>
    </recommendedName>
</protein>
<organism>
    <name type="scientific">Staphylococcus aureus (strain NCTC 8325 / PS 47)</name>
    <dbReference type="NCBI Taxonomy" id="93061"/>
    <lineage>
        <taxon>Bacteria</taxon>
        <taxon>Bacillati</taxon>
        <taxon>Bacillota</taxon>
        <taxon>Bacilli</taxon>
        <taxon>Bacillales</taxon>
        <taxon>Staphylococcaceae</taxon>
        <taxon>Staphylococcus</taxon>
    </lineage>
</organism>